<keyword id="KW-0007">Acetylation</keyword>
<keyword id="KW-0472">Membrane</keyword>
<keyword id="KW-0597">Phosphoprotein</keyword>
<keyword id="KW-0653">Protein transport</keyword>
<keyword id="KW-1185">Reference proteome</keyword>
<keyword id="KW-0812">Transmembrane</keyword>
<keyword id="KW-1133">Transmembrane helix</keyword>
<keyword id="KW-0813">Transport</keyword>
<name>SFT2B_MOUSE</name>
<gene>
    <name evidence="7" type="primary">Sft2d2</name>
</gene>
<accession>Q8VD57</accession>
<organism>
    <name type="scientific">Mus musculus</name>
    <name type="common">Mouse</name>
    <dbReference type="NCBI Taxonomy" id="10090"/>
    <lineage>
        <taxon>Eukaryota</taxon>
        <taxon>Metazoa</taxon>
        <taxon>Chordata</taxon>
        <taxon>Craniata</taxon>
        <taxon>Vertebrata</taxon>
        <taxon>Euteleostomi</taxon>
        <taxon>Mammalia</taxon>
        <taxon>Eutheria</taxon>
        <taxon>Euarchontoglires</taxon>
        <taxon>Glires</taxon>
        <taxon>Rodentia</taxon>
        <taxon>Myomorpha</taxon>
        <taxon>Muroidea</taxon>
        <taxon>Muridae</taxon>
        <taxon>Murinae</taxon>
        <taxon>Mus</taxon>
        <taxon>Mus</taxon>
    </lineage>
</organism>
<sequence length="159" mass="17499">MDKLKKVLSGQDTEDRSGLSEVVEASSLSWGTRIKGFIACFALGILCSVLGTLLLWVPRKGLGLFAVFYTLGNIMSIGSTVFLMGPLKQLKRMFEPTRLIATILVLLCFALTLCSAFLWNKGLALIFCILQSLALTWYSLSYIPYARDAVKKCFAVCLA</sequence>
<reference evidence="6" key="1">
    <citation type="journal article" date="2005" name="Science">
        <title>The transcriptional landscape of the mammalian genome.</title>
        <authorList>
            <person name="Carninci P."/>
            <person name="Kasukawa T."/>
            <person name="Katayama S."/>
            <person name="Gough J."/>
            <person name="Frith M.C."/>
            <person name="Maeda N."/>
            <person name="Oyama R."/>
            <person name="Ravasi T."/>
            <person name="Lenhard B."/>
            <person name="Wells C."/>
            <person name="Kodzius R."/>
            <person name="Shimokawa K."/>
            <person name="Bajic V.B."/>
            <person name="Brenner S.E."/>
            <person name="Batalov S."/>
            <person name="Forrest A.R."/>
            <person name="Zavolan M."/>
            <person name="Davis M.J."/>
            <person name="Wilming L.G."/>
            <person name="Aidinis V."/>
            <person name="Allen J.E."/>
            <person name="Ambesi-Impiombato A."/>
            <person name="Apweiler R."/>
            <person name="Aturaliya R.N."/>
            <person name="Bailey T.L."/>
            <person name="Bansal M."/>
            <person name="Baxter L."/>
            <person name="Beisel K.W."/>
            <person name="Bersano T."/>
            <person name="Bono H."/>
            <person name="Chalk A.M."/>
            <person name="Chiu K.P."/>
            <person name="Choudhary V."/>
            <person name="Christoffels A."/>
            <person name="Clutterbuck D.R."/>
            <person name="Crowe M.L."/>
            <person name="Dalla E."/>
            <person name="Dalrymple B.P."/>
            <person name="de Bono B."/>
            <person name="Della Gatta G."/>
            <person name="di Bernardo D."/>
            <person name="Down T."/>
            <person name="Engstrom P."/>
            <person name="Fagiolini M."/>
            <person name="Faulkner G."/>
            <person name="Fletcher C.F."/>
            <person name="Fukushima T."/>
            <person name="Furuno M."/>
            <person name="Futaki S."/>
            <person name="Gariboldi M."/>
            <person name="Georgii-Hemming P."/>
            <person name="Gingeras T.R."/>
            <person name="Gojobori T."/>
            <person name="Green R.E."/>
            <person name="Gustincich S."/>
            <person name="Harbers M."/>
            <person name="Hayashi Y."/>
            <person name="Hensch T.K."/>
            <person name="Hirokawa N."/>
            <person name="Hill D."/>
            <person name="Huminiecki L."/>
            <person name="Iacono M."/>
            <person name="Ikeo K."/>
            <person name="Iwama A."/>
            <person name="Ishikawa T."/>
            <person name="Jakt M."/>
            <person name="Kanapin A."/>
            <person name="Katoh M."/>
            <person name="Kawasawa Y."/>
            <person name="Kelso J."/>
            <person name="Kitamura H."/>
            <person name="Kitano H."/>
            <person name="Kollias G."/>
            <person name="Krishnan S.P."/>
            <person name="Kruger A."/>
            <person name="Kummerfeld S.K."/>
            <person name="Kurochkin I.V."/>
            <person name="Lareau L.F."/>
            <person name="Lazarevic D."/>
            <person name="Lipovich L."/>
            <person name="Liu J."/>
            <person name="Liuni S."/>
            <person name="McWilliam S."/>
            <person name="Madan Babu M."/>
            <person name="Madera M."/>
            <person name="Marchionni L."/>
            <person name="Matsuda H."/>
            <person name="Matsuzawa S."/>
            <person name="Miki H."/>
            <person name="Mignone F."/>
            <person name="Miyake S."/>
            <person name="Morris K."/>
            <person name="Mottagui-Tabar S."/>
            <person name="Mulder N."/>
            <person name="Nakano N."/>
            <person name="Nakauchi H."/>
            <person name="Ng P."/>
            <person name="Nilsson R."/>
            <person name="Nishiguchi S."/>
            <person name="Nishikawa S."/>
            <person name="Nori F."/>
            <person name="Ohara O."/>
            <person name="Okazaki Y."/>
            <person name="Orlando V."/>
            <person name="Pang K.C."/>
            <person name="Pavan W.J."/>
            <person name="Pavesi G."/>
            <person name="Pesole G."/>
            <person name="Petrovsky N."/>
            <person name="Piazza S."/>
            <person name="Reed J."/>
            <person name="Reid J.F."/>
            <person name="Ring B.Z."/>
            <person name="Ringwald M."/>
            <person name="Rost B."/>
            <person name="Ruan Y."/>
            <person name="Salzberg S.L."/>
            <person name="Sandelin A."/>
            <person name="Schneider C."/>
            <person name="Schoenbach C."/>
            <person name="Sekiguchi K."/>
            <person name="Semple C.A."/>
            <person name="Seno S."/>
            <person name="Sessa L."/>
            <person name="Sheng Y."/>
            <person name="Shibata Y."/>
            <person name="Shimada H."/>
            <person name="Shimada K."/>
            <person name="Silva D."/>
            <person name="Sinclair B."/>
            <person name="Sperling S."/>
            <person name="Stupka E."/>
            <person name="Sugiura K."/>
            <person name="Sultana R."/>
            <person name="Takenaka Y."/>
            <person name="Taki K."/>
            <person name="Tammoja K."/>
            <person name="Tan S.L."/>
            <person name="Tang S."/>
            <person name="Taylor M.S."/>
            <person name="Tegner J."/>
            <person name="Teichmann S.A."/>
            <person name="Ueda H.R."/>
            <person name="van Nimwegen E."/>
            <person name="Verardo R."/>
            <person name="Wei C.L."/>
            <person name="Yagi K."/>
            <person name="Yamanishi H."/>
            <person name="Zabarovsky E."/>
            <person name="Zhu S."/>
            <person name="Zimmer A."/>
            <person name="Hide W."/>
            <person name="Bult C."/>
            <person name="Grimmond S.M."/>
            <person name="Teasdale R.D."/>
            <person name="Liu E.T."/>
            <person name="Brusic V."/>
            <person name="Quackenbush J."/>
            <person name="Wahlestedt C."/>
            <person name="Mattick J.S."/>
            <person name="Hume D.A."/>
            <person name="Kai C."/>
            <person name="Sasaki D."/>
            <person name="Tomaru Y."/>
            <person name="Fukuda S."/>
            <person name="Kanamori-Katayama M."/>
            <person name="Suzuki M."/>
            <person name="Aoki J."/>
            <person name="Arakawa T."/>
            <person name="Iida J."/>
            <person name="Imamura K."/>
            <person name="Itoh M."/>
            <person name="Kato T."/>
            <person name="Kawaji H."/>
            <person name="Kawagashira N."/>
            <person name="Kawashima T."/>
            <person name="Kojima M."/>
            <person name="Kondo S."/>
            <person name="Konno H."/>
            <person name="Nakano K."/>
            <person name="Ninomiya N."/>
            <person name="Nishio T."/>
            <person name="Okada M."/>
            <person name="Plessy C."/>
            <person name="Shibata K."/>
            <person name="Shiraki T."/>
            <person name="Suzuki S."/>
            <person name="Tagami M."/>
            <person name="Waki K."/>
            <person name="Watahiki A."/>
            <person name="Okamura-Oho Y."/>
            <person name="Suzuki H."/>
            <person name="Kawai J."/>
            <person name="Hayashizaki Y."/>
        </authorList>
    </citation>
    <scope>NUCLEOTIDE SEQUENCE [LARGE SCALE MRNA]</scope>
    <source>
        <strain evidence="5">C57BL/6J</strain>
        <strain evidence="6">NOD</strain>
        <tissue evidence="5">Bone</tissue>
        <tissue evidence="6">Spleen</tissue>
    </source>
</reference>
<reference evidence="4" key="2">
    <citation type="journal article" date="2004" name="Genome Res.">
        <title>The status, quality, and expansion of the NIH full-length cDNA project: the Mammalian Gene Collection (MGC).</title>
        <authorList>
            <consortium name="The MGC Project Team"/>
        </authorList>
    </citation>
    <scope>NUCLEOTIDE SEQUENCE [LARGE SCALE MRNA]</scope>
    <source>
        <strain evidence="4">FVB/N</strain>
        <tissue evidence="4">Salivary gland</tissue>
    </source>
</reference>
<reference key="3">
    <citation type="journal article" date="2009" name="Immunity">
        <title>The phagosomal proteome in interferon-gamma-activated macrophages.</title>
        <authorList>
            <person name="Trost M."/>
            <person name="English L."/>
            <person name="Lemieux S."/>
            <person name="Courcelles M."/>
            <person name="Desjardins M."/>
            <person name="Thibault P."/>
        </authorList>
    </citation>
    <scope>PHOSPHORYLATION [LARGE SCALE ANALYSIS] AT SER-9</scope>
    <scope>IDENTIFICATION BY MASS SPECTROMETRY [LARGE SCALE ANALYSIS]</scope>
</reference>
<reference key="4">
    <citation type="journal article" date="2010" name="Cell">
        <title>A tissue-specific atlas of mouse protein phosphorylation and expression.</title>
        <authorList>
            <person name="Huttlin E.L."/>
            <person name="Jedrychowski M.P."/>
            <person name="Elias J.E."/>
            <person name="Goswami T."/>
            <person name="Rad R."/>
            <person name="Beausoleil S.A."/>
            <person name="Villen J."/>
            <person name="Haas W."/>
            <person name="Sowa M.E."/>
            <person name="Gygi S.P."/>
        </authorList>
    </citation>
    <scope>IDENTIFICATION BY MASS SPECTROMETRY [LARGE SCALE ANALYSIS]</scope>
    <source>
        <tissue>Kidney</tissue>
        <tissue>Lung</tissue>
        <tissue>Pancreas</tissue>
    </source>
</reference>
<feature type="chain" id="PRO_0000238611" description="Vesicle transport protein SFT2B">
    <location>
        <begin position="1"/>
        <end position="159"/>
    </location>
</feature>
<feature type="topological domain" description="Cytoplasmic" evidence="3">
    <location>
        <begin position="1"/>
        <end position="36"/>
    </location>
</feature>
<feature type="transmembrane region" description="Helical; Name=1" evidence="3">
    <location>
        <begin position="37"/>
        <end position="57"/>
    </location>
</feature>
<feature type="topological domain" description="Lumenal" evidence="3">
    <location>
        <begin position="58"/>
        <end position="63"/>
    </location>
</feature>
<feature type="transmembrane region" description="Helical; Name=2" evidence="3">
    <location>
        <begin position="64"/>
        <end position="84"/>
    </location>
</feature>
<feature type="topological domain" description="Cytoplasmic" evidence="3">
    <location>
        <begin position="85"/>
        <end position="98"/>
    </location>
</feature>
<feature type="transmembrane region" description="Helical; Name=3" evidence="3">
    <location>
        <begin position="99"/>
        <end position="119"/>
    </location>
</feature>
<feature type="topological domain" description="Lumenal" evidence="3">
    <location>
        <begin position="120"/>
        <end position="122"/>
    </location>
</feature>
<feature type="transmembrane region" description="Helical; Name=4" evidence="3">
    <location>
        <begin position="123"/>
        <end position="143"/>
    </location>
</feature>
<feature type="topological domain" description="Cytoplasmic" evidence="3">
    <location>
        <begin position="144"/>
        <end position="159"/>
    </location>
</feature>
<feature type="modified residue" description="N-acetylmethionine" evidence="1">
    <location>
        <position position="1"/>
    </location>
</feature>
<feature type="modified residue" description="Phosphoserine" evidence="8">
    <location>
        <position position="9"/>
    </location>
</feature>
<proteinExistence type="evidence at protein level"/>
<comment type="function">
    <text evidence="2">May be involved in fusion of retrograde transport vesicles derived from an endocytic compartment with the Golgi complex.</text>
</comment>
<comment type="subcellular location">
    <subcellularLocation>
        <location evidence="3">Membrane</location>
        <topology evidence="3">Multi-pass membrane protein</topology>
    </subcellularLocation>
</comment>
<comment type="similarity">
    <text evidence="3">Belongs to the SFT2 family.</text>
</comment>
<protein>
    <recommendedName>
        <fullName>Vesicle transport protein SFT2B</fullName>
    </recommendedName>
    <alternativeName>
        <fullName>SFT2 domain-containing protein 2</fullName>
    </alternativeName>
</protein>
<evidence type="ECO:0000250" key="1">
    <source>
        <dbReference type="UniProtKB" id="O95562"/>
    </source>
</evidence>
<evidence type="ECO:0000250" key="2">
    <source>
        <dbReference type="UniProtKB" id="P38166"/>
    </source>
</evidence>
<evidence type="ECO:0000255" key="3"/>
<evidence type="ECO:0000312" key="4">
    <source>
        <dbReference type="EMBL" id="AAH17549.1"/>
    </source>
</evidence>
<evidence type="ECO:0000312" key="5">
    <source>
        <dbReference type="EMBL" id="BAC29488.1"/>
    </source>
</evidence>
<evidence type="ECO:0000312" key="6">
    <source>
        <dbReference type="EMBL" id="BAE33921.1"/>
    </source>
</evidence>
<evidence type="ECO:0000312" key="7">
    <source>
        <dbReference type="MGI" id="MGI:1917362"/>
    </source>
</evidence>
<evidence type="ECO:0007744" key="8">
    <source>
    </source>
</evidence>
<dbReference type="EMBL" id="AK036578">
    <property type="protein sequence ID" value="BAC29488.1"/>
    <property type="molecule type" value="mRNA"/>
</dbReference>
<dbReference type="EMBL" id="AK156973">
    <property type="protein sequence ID" value="BAE33921.1"/>
    <property type="molecule type" value="mRNA"/>
</dbReference>
<dbReference type="EMBL" id="BC017549">
    <property type="protein sequence ID" value="AAH17549.1"/>
    <property type="molecule type" value="mRNA"/>
</dbReference>
<dbReference type="CCDS" id="CCDS15440.1"/>
<dbReference type="RefSeq" id="NP_663487.1">
    <property type="nucleotide sequence ID" value="NM_145512.4"/>
</dbReference>
<dbReference type="BioGRID" id="224394">
    <property type="interactions" value="1"/>
</dbReference>
<dbReference type="FunCoup" id="Q8VD57">
    <property type="interactions" value="1556"/>
</dbReference>
<dbReference type="STRING" id="10090.ENSMUSP00000043537"/>
<dbReference type="iPTMnet" id="Q8VD57"/>
<dbReference type="PhosphoSitePlus" id="Q8VD57"/>
<dbReference type="SwissPalm" id="Q8VD57"/>
<dbReference type="jPOST" id="Q8VD57"/>
<dbReference type="PaxDb" id="10090-ENSMUSP00000043537"/>
<dbReference type="PeptideAtlas" id="Q8VD57"/>
<dbReference type="ProteomicsDB" id="261198"/>
<dbReference type="Pumba" id="Q8VD57"/>
<dbReference type="Antibodypedia" id="50453">
    <property type="antibodies" value="154 antibodies from 22 providers"/>
</dbReference>
<dbReference type="Ensembl" id="ENSMUST00000043338.10">
    <property type="protein sequence ID" value="ENSMUSP00000043537.5"/>
    <property type="gene ID" value="ENSMUSG00000040848.12"/>
</dbReference>
<dbReference type="GeneID" id="108735"/>
<dbReference type="KEGG" id="mmu:108735"/>
<dbReference type="UCSC" id="uc007dix.2">
    <property type="organism name" value="mouse"/>
</dbReference>
<dbReference type="AGR" id="MGI:1917362"/>
<dbReference type="CTD" id="375035"/>
<dbReference type="MGI" id="MGI:1917362">
    <property type="gene designation" value="Sft2d2"/>
</dbReference>
<dbReference type="VEuPathDB" id="HostDB:ENSMUSG00000040848"/>
<dbReference type="eggNOG" id="KOG2887">
    <property type="taxonomic scope" value="Eukaryota"/>
</dbReference>
<dbReference type="GeneTree" id="ENSGT00390000018525"/>
<dbReference type="HOGENOM" id="CLU_099529_2_2_1"/>
<dbReference type="InParanoid" id="Q8VD57"/>
<dbReference type="OMA" id="ISCCDTE"/>
<dbReference type="OrthoDB" id="73614at2759"/>
<dbReference type="PhylomeDB" id="Q8VD57"/>
<dbReference type="TreeFam" id="TF315157"/>
<dbReference type="BioGRID-ORCS" id="108735">
    <property type="hits" value="2 hits in 77 CRISPR screens"/>
</dbReference>
<dbReference type="ChiTaRS" id="Sft2d2">
    <property type="organism name" value="mouse"/>
</dbReference>
<dbReference type="PRO" id="PR:Q8VD57"/>
<dbReference type="Proteomes" id="UP000000589">
    <property type="component" value="Chromosome 1"/>
</dbReference>
<dbReference type="RNAct" id="Q8VD57">
    <property type="molecule type" value="protein"/>
</dbReference>
<dbReference type="Bgee" id="ENSMUSG00000040848">
    <property type="expression patterns" value="Expressed in submandibular gland and 244 other cell types or tissues"/>
</dbReference>
<dbReference type="ExpressionAtlas" id="Q8VD57">
    <property type="expression patterns" value="baseline and differential"/>
</dbReference>
<dbReference type="GO" id="GO:0005737">
    <property type="term" value="C:cytoplasm"/>
    <property type="evidence" value="ECO:0007669"/>
    <property type="project" value="UniProtKB-ARBA"/>
</dbReference>
<dbReference type="GO" id="GO:0012505">
    <property type="term" value="C:endomembrane system"/>
    <property type="evidence" value="ECO:0007669"/>
    <property type="project" value="UniProtKB-ARBA"/>
</dbReference>
<dbReference type="GO" id="GO:0043231">
    <property type="term" value="C:intracellular membrane-bounded organelle"/>
    <property type="evidence" value="ECO:0007669"/>
    <property type="project" value="UniProtKB-ARBA"/>
</dbReference>
<dbReference type="GO" id="GO:0016020">
    <property type="term" value="C:membrane"/>
    <property type="evidence" value="ECO:0007669"/>
    <property type="project" value="UniProtKB-SubCell"/>
</dbReference>
<dbReference type="GO" id="GO:0015031">
    <property type="term" value="P:protein transport"/>
    <property type="evidence" value="ECO:0007669"/>
    <property type="project" value="UniProtKB-KW"/>
</dbReference>
<dbReference type="GO" id="GO:0016192">
    <property type="term" value="P:vesicle-mediated transport"/>
    <property type="evidence" value="ECO:0007669"/>
    <property type="project" value="InterPro"/>
</dbReference>
<dbReference type="InterPro" id="IPR007305">
    <property type="entry name" value="Vesicle_transpt_Got1/SFT2"/>
</dbReference>
<dbReference type="InterPro" id="IPR011691">
    <property type="entry name" value="Vesicle_transpt_SFT2"/>
</dbReference>
<dbReference type="PANTHER" id="PTHR23137:SF1">
    <property type="entry name" value="VESICLE TRANSPORT PROTEIN SFT2B"/>
    <property type="match status" value="1"/>
</dbReference>
<dbReference type="PANTHER" id="PTHR23137">
    <property type="entry name" value="VESICLE TRANSPORT PROTEIN-RELATED"/>
    <property type="match status" value="1"/>
</dbReference>
<dbReference type="Pfam" id="PF04178">
    <property type="entry name" value="Got1"/>
    <property type="match status" value="1"/>
</dbReference>